<keyword id="KW-0143">Chaperone</keyword>
<keyword id="KW-0963">Cytoplasm</keyword>
<keyword id="KW-0507">mRNA processing</keyword>
<keyword id="KW-0508">mRNA splicing</keyword>
<keyword id="KW-0509">mRNA transport</keyword>
<keyword id="KW-0539">Nucleus</keyword>
<keyword id="KW-1185">Reference proteome</keyword>
<keyword id="KW-0694">RNA-binding</keyword>
<keyword id="KW-0813">Transport</keyword>
<dbReference type="EMBL" id="DQ213511">
    <property type="protein sequence ID" value="ACH43799.1"/>
    <property type="molecule type" value="mRNA"/>
</dbReference>
<dbReference type="EMBL" id="DQ213512">
    <property type="protein sequence ID" value="ACH43800.1"/>
    <property type="molecule type" value="mRNA"/>
</dbReference>
<dbReference type="EMBL" id="DQ213513">
    <property type="protein sequence ID" value="ACH43801.1"/>
    <property type="molecule type" value="mRNA"/>
</dbReference>
<dbReference type="EMBL" id="DQ213514">
    <property type="protein sequence ID" value="ACH43802.1"/>
    <property type="molecule type" value="mRNA"/>
</dbReference>
<dbReference type="EMBL" id="DQ213516">
    <property type="protein sequence ID" value="ACH43804.1"/>
    <property type="molecule type" value="mRNA"/>
</dbReference>
<dbReference type="EMBL" id="DQ213517">
    <property type="protein sequence ID" value="ACH43805.1"/>
    <property type="molecule type" value="mRNA"/>
</dbReference>
<dbReference type="EMBL" id="DQ213518">
    <property type="protein sequence ID" value="ACH43806.1"/>
    <property type="molecule type" value="mRNA"/>
</dbReference>
<dbReference type="EMBL" id="DQ213519">
    <property type="protein sequence ID" value="ACH43807.1"/>
    <property type="molecule type" value="mRNA"/>
</dbReference>
<dbReference type="EMBL" id="DQ213520">
    <property type="protein sequence ID" value="ACH43808.1"/>
    <property type="molecule type" value="mRNA"/>
</dbReference>
<dbReference type="RefSeq" id="NP_001232343.1">
    <property type="nucleotide sequence ID" value="NM_001245414.1"/>
</dbReference>
<dbReference type="BMRB" id="B5FXN8"/>
<dbReference type="SMR" id="B5FXN8"/>
<dbReference type="FunCoup" id="B5FXN8">
    <property type="interactions" value="810"/>
</dbReference>
<dbReference type="STRING" id="59729.ENSTGUP00000003623"/>
<dbReference type="Ensembl" id="ENSTGUT00000003662.2">
    <property type="protein sequence ID" value="ENSTGUP00000003623.2"/>
    <property type="gene ID" value="ENSTGUG00000003513.2"/>
</dbReference>
<dbReference type="GeneID" id="100190053"/>
<dbReference type="KEGG" id="tgu:100190053"/>
<dbReference type="CTD" id="10189"/>
<dbReference type="GeneTree" id="ENSGT00410000025615"/>
<dbReference type="InParanoid" id="B5FXN8"/>
<dbReference type="OMA" id="RNDYPRD"/>
<dbReference type="OrthoDB" id="1049195at2759"/>
<dbReference type="Proteomes" id="UP000007754">
    <property type="component" value="Chromosome 18"/>
</dbReference>
<dbReference type="GO" id="GO:0005737">
    <property type="term" value="C:cytoplasm"/>
    <property type="evidence" value="ECO:0000250"/>
    <property type="project" value="UniProtKB"/>
</dbReference>
<dbReference type="GO" id="GO:0016607">
    <property type="term" value="C:nuclear speck"/>
    <property type="evidence" value="ECO:0007669"/>
    <property type="project" value="UniProtKB-SubCell"/>
</dbReference>
<dbReference type="GO" id="GO:0005634">
    <property type="term" value="C:nucleus"/>
    <property type="evidence" value="ECO:0000250"/>
    <property type="project" value="UniProtKB"/>
</dbReference>
<dbReference type="GO" id="GO:0062153">
    <property type="term" value="F:C5-methylcytidine-containing RNA reader activity"/>
    <property type="evidence" value="ECO:0000250"/>
    <property type="project" value="UniProtKB"/>
</dbReference>
<dbReference type="GO" id="GO:0003729">
    <property type="term" value="F:mRNA binding"/>
    <property type="evidence" value="ECO:0007669"/>
    <property type="project" value="TreeGrafter"/>
</dbReference>
<dbReference type="GO" id="GO:0006406">
    <property type="term" value="P:mRNA export from nucleus"/>
    <property type="evidence" value="ECO:0007669"/>
    <property type="project" value="TreeGrafter"/>
</dbReference>
<dbReference type="GO" id="GO:0006397">
    <property type="term" value="P:mRNA processing"/>
    <property type="evidence" value="ECO:0007669"/>
    <property type="project" value="UniProtKB-KW"/>
</dbReference>
<dbReference type="GO" id="GO:0006405">
    <property type="term" value="P:RNA export from nucleus"/>
    <property type="evidence" value="ECO:0000250"/>
    <property type="project" value="UniProtKB"/>
</dbReference>
<dbReference type="GO" id="GO:0008380">
    <property type="term" value="P:RNA splicing"/>
    <property type="evidence" value="ECO:0007669"/>
    <property type="project" value="UniProtKB-KW"/>
</dbReference>
<dbReference type="CDD" id="cd12680">
    <property type="entry name" value="RRM_THOC4"/>
    <property type="match status" value="1"/>
</dbReference>
<dbReference type="FunFam" id="3.30.70.330:FF:000273">
    <property type="entry name" value="THO complex subunit 4"/>
    <property type="match status" value="1"/>
</dbReference>
<dbReference type="Gene3D" id="3.30.70.330">
    <property type="match status" value="1"/>
</dbReference>
<dbReference type="InterPro" id="IPR051229">
    <property type="entry name" value="ALYREF_mRNA_export"/>
</dbReference>
<dbReference type="InterPro" id="IPR025715">
    <property type="entry name" value="FoP_C"/>
</dbReference>
<dbReference type="InterPro" id="IPR012677">
    <property type="entry name" value="Nucleotide-bd_a/b_plait_sf"/>
</dbReference>
<dbReference type="InterPro" id="IPR035979">
    <property type="entry name" value="RBD_domain_sf"/>
</dbReference>
<dbReference type="InterPro" id="IPR000504">
    <property type="entry name" value="RRM_dom"/>
</dbReference>
<dbReference type="PANTHER" id="PTHR19965">
    <property type="entry name" value="RNA AND EXPORT FACTOR BINDING PROTEIN"/>
    <property type="match status" value="1"/>
</dbReference>
<dbReference type="PANTHER" id="PTHR19965:SF82">
    <property type="entry name" value="THO COMPLEX SUBUNIT 4"/>
    <property type="match status" value="1"/>
</dbReference>
<dbReference type="Pfam" id="PF13865">
    <property type="entry name" value="FoP_duplication"/>
    <property type="match status" value="1"/>
</dbReference>
<dbReference type="Pfam" id="PF00076">
    <property type="entry name" value="RRM_1"/>
    <property type="match status" value="1"/>
</dbReference>
<dbReference type="SMART" id="SM01218">
    <property type="entry name" value="FoP_duplication"/>
    <property type="match status" value="1"/>
</dbReference>
<dbReference type="SMART" id="SM00360">
    <property type="entry name" value="RRM"/>
    <property type="match status" value="1"/>
</dbReference>
<dbReference type="SUPFAM" id="SSF54928">
    <property type="entry name" value="RNA-binding domain, RBD"/>
    <property type="match status" value="1"/>
</dbReference>
<dbReference type="PROSITE" id="PS50102">
    <property type="entry name" value="RRM"/>
    <property type="match status" value="1"/>
</dbReference>
<sequence>MADKMDMSLDDIIKLNRSQRGASRGGRGGRGRGGTARGGGPGRGGVGGGRAGGGPVRNRPVMARGGGRNRPAPYSRPKQLPEKWQHDLFDSGFGAGAGVETGGKLLVSNLDFGVSDADIQELFAEFGTLKKAAVHYDRSGRSLGTADVHFERKADALKAMKQYNGVPLDGRPMNIQLVTSQIDTQRRPAQSVNRGGMTRNRGVLGGFGGGGNRRGTRGGNRGRGRGAGRTSKQQLSAEELDAQLDAYNARMDTS</sequence>
<organism>
    <name type="scientific">Taeniopygia guttata</name>
    <name type="common">Zebra finch</name>
    <name type="synonym">Poephila guttata</name>
    <dbReference type="NCBI Taxonomy" id="59729"/>
    <lineage>
        <taxon>Eukaryota</taxon>
        <taxon>Metazoa</taxon>
        <taxon>Chordata</taxon>
        <taxon>Craniata</taxon>
        <taxon>Vertebrata</taxon>
        <taxon>Euteleostomi</taxon>
        <taxon>Archelosauria</taxon>
        <taxon>Archosauria</taxon>
        <taxon>Dinosauria</taxon>
        <taxon>Saurischia</taxon>
        <taxon>Theropoda</taxon>
        <taxon>Coelurosauria</taxon>
        <taxon>Aves</taxon>
        <taxon>Neognathae</taxon>
        <taxon>Neoaves</taxon>
        <taxon>Telluraves</taxon>
        <taxon>Australaves</taxon>
        <taxon>Passeriformes</taxon>
        <taxon>Passeroidea</taxon>
        <taxon>Estrildidae</taxon>
        <taxon>Estrildinae</taxon>
        <taxon>Taeniopygia</taxon>
    </lineage>
</organism>
<proteinExistence type="evidence at transcript level"/>
<reference key="1">
    <citation type="journal article" date="2006" name="Proc. Natl. Acad. Sci. U.S.A.">
        <title>A molecular neuroethological approach for identifying and characterizing a cascade of behaviorally regulated genes.</title>
        <authorList>
            <person name="Wada K."/>
            <person name="Howard J.T."/>
            <person name="McConnell P."/>
            <person name="Whitney O."/>
            <person name="Lints T."/>
            <person name="Rivas M.V."/>
            <person name="Horita H."/>
            <person name="Patterson M.A."/>
            <person name="White S.A."/>
            <person name="Scharff C."/>
            <person name="Haesler S."/>
            <person name="Zhao S."/>
            <person name="Sakaguchi H."/>
            <person name="Hagiwara M."/>
            <person name="Shiraki T."/>
            <person name="Hirozane-Kishikawa T."/>
            <person name="Skene P."/>
            <person name="Hayashizaki Y."/>
            <person name="Carninci P."/>
            <person name="Jarvis E.D."/>
        </authorList>
    </citation>
    <scope>NUCLEOTIDE SEQUENCE [LARGE SCALE MRNA]</scope>
    <source>
        <tissue>Brain</tissue>
    </source>
</reference>
<feature type="chain" id="PRO_0000378579" description="THO complex subunit 4">
    <location>
        <begin position="1"/>
        <end position="254"/>
    </location>
</feature>
<feature type="domain" description="RRM" evidence="2">
    <location>
        <begin position="103"/>
        <end position="180"/>
    </location>
</feature>
<feature type="region of interest" description="Disordered" evidence="3">
    <location>
        <begin position="1"/>
        <end position="79"/>
    </location>
</feature>
<feature type="region of interest" description="Disordered" evidence="3">
    <location>
        <begin position="183"/>
        <end position="254"/>
    </location>
</feature>
<feature type="compositionally biased region" description="Basic and acidic residues" evidence="3">
    <location>
        <begin position="1"/>
        <end position="14"/>
    </location>
</feature>
<feature type="compositionally biased region" description="Gly residues" evidence="3">
    <location>
        <begin position="23"/>
        <end position="55"/>
    </location>
</feature>
<feature type="compositionally biased region" description="Polar residues" evidence="3">
    <location>
        <begin position="183"/>
        <end position="193"/>
    </location>
</feature>
<feature type="compositionally biased region" description="Gly residues" evidence="3">
    <location>
        <begin position="203"/>
        <end position="213"/>
    </location>
</feature>
<feature type="compositionally biased region" description="Basic residues" evidence="3">
    <location>
        <begin position="214"/>
        <end position="226"/>
    </location>
</feature>
<feature type="sequence conflict" description="In Ref. 1; ACH43805." evidence="4" ref="1">
    <original>II</original>
    <variation>FL</variation>
    <location>
        <begin position="12"/>
        <end position="13"/>
    </location>
</feature>
<feature type="sequence conflict" description="In Ref. 1; ACH43806." evidence="4" ref="1">
    <original>E</original>
    <variation>Y</variation>
    <location>
        <position position="100"/>
    </location>
</feature>
<feature type="sequence conflict" description="In Ref. 1; ACH43805/ACH43807/ACH43808." evidence="4" ref="1">
    <original>S</original>
    <variation>F</variation>
    <location>
        <position position="236"/>
    </location>
</feature>
<evidence type="ECO:0000250" key="1">
    <source>
        <dbReference type="UniProtKB" id="Q86V81"/>
    </source>
</evidence>
<evidence type="ECO:0000255" key="2">
    <source>
        <dbReference type="PROSITE-ProRule" id="PRU00176"/>
    </source>
</evidence>
<evidence type="ECO:0000256" key="3">
    <source>
        <dbReference type="SAM" id="MobiDB-lite"/>
    </source>
</evidence>
<evidence type="ECO:0000305" key="4"/>
<accession>B5FXN8</accession>
<accession>B5FXP4</accession>
<accession>B5FXP5</accession>
<accession>B5FXP6</accession>
<comment type="function">
    <text evidence="1">Functions as an mRNA export adapter; component of the transcription/export (TREX) complex which is thought to couple mRNA transcription, processing and nuclear export, and specifically associates with spliced mRNA and not with unspliced pre-mRNA. TREX is recruited to spliced mRNAs by a transcription-independent mechanism, binds to mRNA upstream of the exon-junction complex (EJC) and is recruited in a splicing- and cap-dependent manner to a region near the 5' end of the mRNA where it functions in mRNA export to the cytoplasm via the TAP/NXF1 pathway. Involved in the nuclear export of intronless mRNA; proposed to be recruited to intronless mRNA by ATP-bound DDX39B. Plays a key role in mRNP recognition and mRNA packaging by bridging the mRNP-bound EJC and the TREX core complex. TREX recruitment occurs via an interaction between ALYREF/THOC4 and the cap-binding protein NCBP1. Required for TREX complex assembly and for linking DDX39B to the cap-binding complex (CBC). Binds mRNA which is thought to be transferred to the NXF1-NXT1 heterodimer for export (TAP/NXF1 pathway). In conjunction with THOC5 functions in NXF1-NXT1 mediated nuclear export of HSP70 mRNA; both proteins enhance the RNA binding activity of NXF1 and are required for NXF1 localization to the nuclear rim. Involved in mRNA export of C5-methylcytosine (m5C)-containing mRNAs: specifically recognizes and binds m5C mRNAs and mediates their nucleo-cytoplasmic shuttling. Acts as a chaperone and promotes the dimerization of transcription factors containing basic leucine zipper (bZIP) domains and thereby promotes transcriptional activation. Involved in transcription elongation and genome stability (By similarity).</text>
</comment>
<comment type="subunit">
    <text evidence="1">Homomultimer. Is part of several complexes involved in mRNA processing and export. Component of the transcription/export (TREX) complex at least composed of ALYREF/THOC4, DDX39B, SARNP/CIP29, CHTOP and the THO subcomplex; TREX seems to have a dynamic structure involving ATP-dependent remodeling (By similarity).</text>
</comment>
<comment type="subcellular location">
    <subcellularLocation>
        <location evidence="1">Nucleus</location>
    </subcellularLocation>
    <subcellularLocation>
        <location evidence="1">Nucleus speckle</location>
    </subcellularLocation>
    <subcellularLocation>
        <location evidence="1">Cytoplasm</location>
    </subcellularLocation>
    <text evidence="1">Travels to the cytoplasm as part of the exon junction complex (EJC) bound to mRNA.</text>
</comment>
<comment type="similarity">
    <text evidence="4">Belongs to the ALYREF family.</text>
</comment>
<gene>
    <name type="primary">ALYREF</name>
    <name type="synonym">THOC4</name>
</gene>
<protein>
    <recommendedName>
        <fullName>THO complex subunit 4</fullName>
        <shortName>Tho4</shortName>
    </recommendedName>
    <alternativeName>
        <fullName>Aly/REF export factor</fullName>
    </alternativeName>
</protein>
<name>THOC4_TAEGU</name>